<accession>Q9SUR9</accession>
<accession>Q84LL4</accession>
<accession>Q8W515</accession>
<reference key="1">
    <citation type="journal article" date="2002" name="Science">
        <title>The RAR1 interactor SGT1, an essential component of R gene-triggered disease resistance.</title>
        <authorList>
            <person name="Azevedo C."/>
            <person name="Sadanandom A."/>
            <person name="Kitagawa K."/>
            <person name="Freialdenhoven A."/>
            <person name="Shirasu K."/>
            <person name="Schulze-Lefert P."/>
        </authorList>
    </citation>
    <scope>NUCLEOTIDE SEQUENCE [MRNA] (ISOFORM 1)</scope>
    <scope>INTERACTION WITH RAR1</scope>
</reference>
<reference key="2">
    <citation type="journal article" date="1999" name="Nature">
        <title>Sequence and analysis of chromosome 4 of the plant Arabidopsis thaliana.</title>
        <authorList>
            <person name="Mayer K.F.X."/>
            <person name="Schueller C."/>
            <person name="Wambutt R."/>
            <person name="Murphy G."/>
            <person name="Volckaert G."/>
            <person name="Pohl T."/>
            <person name="Duesterhoeft A."/>
            <person name="Stiekema W."/>
            <person name="Entian K.-D."/>
            <person name="Terryn N."/>
            <person name="Harris B."/>
            <person name="Ansorge W."/>
            <person name="Brandt P."/>
            <person name="Grivell L.A."/>
            <person name="Rieger M."/>
            <person name="Weichselgartner M."/>
            <person name="de Simone V."/>
            <person name="Obermaier B."/>
            <person name="Mache R."/>
            <person name="Mueller M."/>
            <person name="Kreis M."/>
            <person name="Delseny M."/>
            <person name="Puigdomenech P."/>
            <person name="Watson M."/>
            <person name="Schmidtheini T."/>
            <person name="Reichert B."/>
            <person name="Portetelle D."/>
            <person name="Perez-Alonso M."/>
            <person name="Boutry M."/>
            <person name="Bancroft I."/>
            <person name="Vos P."/>
            <person name="Hoheisel J."/>
            <person name="Zimmermann W."/>
            <person name="Wedler H."/>
            <person name="Ridley P."/>
            <person name="Langham S.-A."/>
            <person name="McCullagh B."/>
            <person name="Bilham L."/>
            <person name="Robben J."/>
            <person name="van der Schueren J."/>
            <person name="Grymonprez B."/>
            <person name="Chuang Y.-J."/>
            <person name="Vandenbussche F."/>
            <person name="Braeken M."/>
            <person name="Weltjens I."/>
            <person name="Voet M."/>
            <person name="Bastiaens I."/>
            <person name="Aert R."/>
            <person name="Defoor E."/>
            <person name="Weitzenegger T."/>
            <person name="Bothe G."/>
            <person name="Ramsperger U."/>
            <person name="Hilbert H."/>
            <person name="Braun M."/>
            <person name="Holzer E."/>
            <person name="Brandt A."/>
            <person name="Peters S."/>
            <person name="van Staveren M."/>
            <person name="Dirkse W."/>
            <person name="Mooijman P."/>
            <person name="Klein Lankhorst R."/>
            <person name="Rose M."/>
            <person name="Hauf J."/>
            <person name="Koetter P."/>
            <person name="Berneiser S."/>
            <person name="Hempel S."/>
            <person name="Feldpausch M."/>
            <person name="Lamberth S."/>
            <person name="Van den Daele H."/>
            <person name="De Keyser A."/>
            <person name="Buysshaert C."/>
            <person name="Gielen J."/>
            <person name="Villarroel R."/>
            <person name="De Clercq R."/>
            <person name="van Montagu M."/>
            <person name="Rogers J."/>
            <person name="Cronin A."/>
            <person name="Quail M.A."/>
            <person name="Bray-Allen S."/>
            <person name="Clark L."/>
            <person name="Doggett J."/>
            <person name="Hall S."/>
            <person name="Kay M."/>
            <person name="Lennard N."/>
            <person name="McLay K."/>
            <person name="Mayes R."/>
            <person name="Pettett A."/>
            <person name="Rajandream M.A."/>
            <person name="Lyne M."/>
            <person name="Benes V."/>
            <person name="Rechmann S."/>
            <person name="Borkova D."/>
            <person name="Bloecker H."/>
            <person name="Scharfe M."/>
            <person name="Grimm M."/>
            <person name="Loehnert T.-H."/>
            <person name="Dose S."/>
            <person name="de Haan M."/>
            <person name="Maarse A.C."/>
            <person name="Schaefer M."/>
            <person name="Mueller-Auer S."/>
            <person name="Gabel C."/>
            <person name="Fuchs M."/>
            <person name="Fartmann B."/>
            <person name="Granderath K."/>
            <person name="Dauner D."/>
            <person name="Herzl A."/>
            <person name="Neumann S."/>
            <person name="Argiriou A."/>
            <person name="Vitale D."/>
            <person name="Liguori R."/>
            <person name="Piravandi E."/>
            <person name="Massenet O."/>
            <person name="Quigley F."/>
            <person name="Clabauld G."/>
            <person name="Muendlein A."/>
            <person name="Felber R."/>
            <person name="Schnabl S."/>
            <person name="Hiller R."/>
            <person name="Schmidt W."/>
            <person name="Lecharny A."/>
            <person name="Aubourg S."/>
            <person name="Chefdor F."/>
            <person name="Cooke R."/>
            <person name="Berger C."/>
            <person name="Monfort A."/>
            <person name="Casacuberta E."/>
            <person name="Gibbons T."/>
            <person name="Weber N."/>
            <person name="Vandenbol M."/>
            <person name="Bargues M."/>
            <person name="Terol J."/>
            <person name="Torres A."/>
            <person name="Perez-Perez A."/>
            <person name="Purnelle B."/>
            <person name="Bent E."/>
            <person name="Johnson S."/>
            <person name="Tacon D."/>
            <person name="Jesse T."/>
            <person name="Heijnen L."/>
            <person name="Schwarz S."/>
            <person name="Scholler P."/>
            <person name="Heber S."/>
            <person name="Francs P."/>
            <person name="Bielke C."/>
            <person name="Frishman D."/>
            <person name="Haase D."/>
            <person name="Lemcke K."/>
            <person name="Mewes H.-W."/>
            <person name="Stocker S."/>
            <person name="Zaccaria P."/>
            <person name="Bevan M."/>
            <person name="Wilson R.K."/>
            <person name="de la Bastide M."/>
            <person name="Habermann K."/>
            <person name="Parnell L."/>
            <person name="Dedhia N."/>
            <person name="Gnoj L."/>
            <person name="Schutz K."/>
            <person name="Huang E."/>
            <person name="Spiegel L."/>
            <person name="Sekhon M."/>
            <person name="Murray J."/>
            <person name="Sheet P."/>
            <person name="Cordes M."/>
            <person name="Abu-Threideh J."/>
            <person name="Stoneking T."/>
            <person name="Kalicki J."/>
            <person name="Graves T."/>
            <person name="Harmon G."/>
            <person name="Edwards J."/>
            <person name="Latreille P."/>
            <person name="Courtney L."/>
            <person name="Cloud J."/>
            <person name="Abbott A."/>
            <person name="Scott K."/>
            <person name="Johnson D."/>
            <person name="Minx P."/>
            <person name="Bentley D."/>
            <person name="Fulton B."/>
            <person name="Miller N."/>
            <person name="Greco T."/>
            <person name="Kemp K."/>
            <person name="Kramer J."/>
            <person name="Fulton L."/>
            <person name="Mardis E."/>
            <person name="Dante M."/>
            <person name="Pepin K."/>
            <person name="Hillier L.W."/>
            <person name="Nelson J."/>
            <person name="Spieth J."/>
            <person name="Ryan E."/>
            <person name="Andrews S."/>
            <person name="Geisel C."/>
            <person name="Layman D."/>
            <person name="Du H."/>
            <person name="Ali J."/>
            <person name="Berghoff A."/>
            <person name="Jones K."/>
            <person name="Drone K."/>
            <person name="Cotton M."/>
            <person name="Joshu C."/>
            <person name="Antonoiu B."/>
            <person name="Zidanic M."/>
            <person name="Strong C."/>
            <person name="Sun H."/>
            <person name="Lamar B."/>
            <person name="Yordan C."/>
            <person name="Ma P."/>
            <person name="Zhong J."/>
            <person name="Preston R."/>
            <person name="Vil D."/>
            <person name="Shekher M."/>
            <person name="Matero A."/>
            <person name="Shah R."/>
            <person name="Swaby I.K."/>
            <person name="O'Shaughnessy A."/>
            <person name="Rodriguez M."/>
            <person name="Hoffman J."/>
            <person name="Till S."/>
            <person name="Granat S."/>
            <person name="Shohdy N."/>
            <person name="Hasegawa A."/>
            <person name="Hameed A."/>
            <person name="Lodhi M."/>
            <person name="Johnson A."/>
            <person name="Chen E."/>
            <person name="Marra M.A."/>
            <person name="Martienssen R."/>
            <person name="McCombie W.R."/>
        </authorList>
    </citation>
    <scope>NUCLEOTIDE SEQUENCE [LARGE SCALE GENOMIC DNA]</scope>
    <source>
        <strain>cv. Columbia</strain>
    </source>
</reference>
<reference key="3">
    <citation type="journal article" date="2017" name="Plant J.">
        <title>Araport11: a complete reannotation of the Arabidopsis thaliana reference genome.</title>
        <authorList>
            <person name="Cheng C.Y."/>
            <person name="Krishnakumar V."/>
            <person name="Chan A.P."/>
            <person name="Thibaud-Nissen F."/>
            <person name="Schobel S."/>
            <person name="Town C.D."/>
        </authorList>
    </citation>
    <scope>GENOME REANNOTATION</scope>
    <source>
        <strain>cv. Columbia</strain>
    </source>
</reference>
<reference key="4">
    <citation type="journal article" date="2003" name="Science">
        <title>Empirical analysis of transcriptional activity in the Arabidopsis genome.</title>
        <authorList>
            <person name="Yamada K."/>
            <person name="Lim J."/>
            <person name="Dale J.M."/>
            <person name="Chen H."/>
            <person name="Shinn P."/>
            <person name="Palm C.J."/>
            <person name="Southwick A.M."/>
            <person name="Wu H.C."/>
            <person name="Kim C.J."/>
            <person name="Nguyen M."/>
            <person name="Pham P.K."/>
            <person name="Cheuk R.F."/>
            <person name="Karlin-Newmann G."/>
            <person name="Liu S.X."/>
            <person name="Lam B."/>
            <person name="Sakano H."/>
            <person name="Wu T."/>
            <person name="Yu G."/>
            <person name="Miranda M."/>
            <person name="Quach H.L."/>
            <person name="Tripp M."/>
            <person name="Chang C.H."/>
            <person name="Lee J.M."/>
            <person name="Toriumi M.J."/>
            <person name="Chan M.M."/>
            <person name="Tang C.C."/>
            <person name="Onodera C.S."/>
            <person name="Deng J.M."/>
            <person name="Akiyama K."/>
            <person name="Ansari Y."/>
            <person name="Arakawa T."/>
            <person name="Banh J."/>
            <person name="Banno F."/>
            <person name="Bowser L."/>
            <person name="Brooks S.Y."/>
            <person name="Carninci P."/>
            <person name="Chao Q."/>
            <person name="Choy N."/>
            <person name="Enju A."/>
            <person name="Goldsmith A.D."/>
            <person name="Gurjal M."/>
            <person name="Hansen N.F."/>
            <person name="Hayashizaki Y."/>
            <person name="Johnson-Hopson C."/>
            <person name="Hsuan V.W."/>
            <person name="Iida K."/>
            <person name="Karnes M."/>
            <person name="Khan S."/>
            <person name="Koesema E."/>
            <person name="Ishida J."/>
            <person name="Jiang P.X."/>
            <person name="Jones T."/>
            <person name="Kawai J."/>
            <person name="Kamiya A."/>
            <person name="Meyers C."/>
            <person name="Nakajima M."/>
            <person name="Narusaka M."/>
            <person name="Seki M."/>
            <person name="Sakurai T."/>
            <person name="Satou M."/>
            <person name="Tamse R."/>
            <person name="Vaysberg M."/>
            <person name="Wallender E.K."/>
            <person name="Wong C."/>
            <person name="Yamamura Y."/>
            <person name="Yuan S."/>
            <person name="Shinozaki K."/>
            <person name="Davis R.W."/>
            <person name="Theologis A."/>
            <person name="Ecker J.R."/>
        </authorList>
    </citation>
    <scope>NUCLEOTIDE SEQUENCE [LARGE SCALE MRNA] (ISOFORM 1)</scope>
    <source>
        <strain>cv. Columbia</strain>
    </source>
</reference>
<reference key="5">
    <citation type="journal article" date="2003" name="Proc. Natl. Acad. Sci. U.S.A.">
        <title>The evolution of early Foraminifera.</title>
        <authorList>
            <person name="Pawlowski J."/>
            <person name="Holzmann M."/>
            <person name="Berney C."/>
            <person name="Fahrni J."/>
            <person name="Gooday A.J."/>
            <person name="Cedhagen T."/>
            <person name="Habura A."/>
            <person name="Bowser S.S."/>
        </authorList>
    </citation>
    <scope>NUCLEOTIDE SEQUENCE [MRNA] OF 77-350</scope>
</reference>
<reference key="6">
    <citation type="journal article" date="2006" name="EMBO J.">
        <title>Role of SGT1 in resistance protein accumulation in plant immunity.</title>
        <authorList>
            <person name="Azevedo C."/>
            <person name="Betsuyaku S."/>
            <person name="Peart J."/>
            <person name="Takahashi A."/>
            <person name="Noel L."/>
            <person name="Sadanandom A."/>
            <person name="Casais C."/>
            <person name="Parker J."/>
            <person name="Shirasu K."/>
        </authorList>
    </citation>
    <scope>FUNCTION</scope>
    <scope>INDUCTION</scope>
</reference>
<reference key="7">
    <citation type="journal article" date="2007" name="Plant Cell">
        <title>Interaction between SGT1 and cytosolic/nuclear HSC70 chaperones regulates Arabidopsis immune responses.</title>
        <authorList>
            <person name="Noel L.D."/>
            <person name="Cagna G."/>
            <person name="Stuttmann J."/>
            <person name="Wirthmueller L."/>
            <person name="Betsuyaku S."/>
            <person name="Witte C.P."/>
            <person name="Bhat R."/>
            <person name="Pochon N."/>
            <person name="Colby T."/>
            <person name="Parker J.E."/>
        </authorList>
    </citation>
    <scope>INDUCTION BY HEAT SHOCK</scope>
</reference>
<reference key="8">
    <citation type="journal article" date="2008" name="EMBO J.">
        <title>Structural and functional coupling of Hsp90- and Sgt1-centred multi-protein complexes.</title>
        <authorList>
            <person name="Zhang M."/>
            <person name="Boter M."/>
            <person name="Li K."/>
            <person name="Kadota Y."/>
            <person name="Panaretou B."/>
            <person name="Prodromou C."/>
            <person name="Shirasu K."/>
            <person name="Pearl L.H."/>
        </authorList>
    </citation>
    <scope>X-RAY CRYSTALLOGRAPHY (3.30 ANGSTROMS) OF 151-240 IN COMPLEX WITH BARLEY HSP90</scope>
    <scope>MUTAGENESIS OF TYR-157; PHE-168; TYR-199; THR-220; LYS-221 AND GLU-223</scope>
</reference>
<reference key="9">
    <citation type="journal article" date="2010" name="Mol. Cell">
        <title>Structural basis for assembly of Hsp90-Sgt1-CHORD protein complexes: implications for chaperoning of NLR innate immunity receptors.</title>
        <authorList>
            <person name="Zhang M."/>
            <person name="Kadota Y."/>
            <person name="Prodromou C."/>
            <person name="Shirasu K."/>
            <person name="Pearl L.H."/>
        </authorList>
    </citation>
    <scope>X-RAY CRYSTALLOGRAPHY (2.20 ANGSTROMS) OF 150-241 IN COMPLEX WITH RAR1 AND BARLEY HSP90</scope>
    <scope>SUBUNIT</scope>
</reference>
<name>SGT1A_ARATH</name>
<sequence>MAKELADKAKEAFVDDDFDVAVDLYSKAIDLDPNCAEFFADRAQAYIKLESFTEAVADANKAIELDPSLTKAYLRKGTACMKLEEYRTAKTALEKGASITPSESKFKKLIDECNFLITEEEKDLVQPVPSTLPSSVTAPPVSELDVTPTAKYRHEYYQKPEEVVVTVFAKGIPKQNVNIDFGEQILSVVIEVPGEDAYYLQPRLFGKIIPDKCKYEVLSTKIEICLAKADIITWASLEHGKGPAVLPKPNVSSEVSQRPAYPSSKKVKDWDKLEAEVKKQEKDEKLEGDAALNKFFREIYQNADEDMRRAMSKSFVESNGTVLSTNWQEVGTKTIESTPPDGMELKKWEI</sequence>
<proteinExistence type="evidence at protein level"/>
<comment type="function">
    <text evidence="5">Functions in R gene-mediated resistance, but participates in a lower extent than SGT1B to RPP5-mediated resistance. Not required for RPM1, RPS2, RPS4 and RPS5-mediated resistance. Probably required for SCF-mediated ubiquitination, by coupling HSP90 to SCF complex for ubiquitination of HSP90 client proteins.</text>
</comment>
<comment type="subunit">
    <text evidence="4 7 8">Interacts with RAR1. Forms a ternary complex with RAR1 and barley HSP90.</text>
</comment>
<comment type="interaction">
    <interactant intactId="EBI-1778186">
        <id>Q9SUR9</id>
    </interactant>
    <interactant intactId="EBI-8080730">
        <id>Q7XJ80</id>
        <label>HSP90</label>
    </interactant>
    <organismsDiffer>true</organismsDiffer>
    <experiments>8</experiments>
</comment>
<comment type="interaction">
    <interactant intactId="EBI-1778186">
        <id>Q9SUR9</id>
    </interactant>
    <interactant intactId="EBI-8081141">
        <id>Q0Q0I7</id>
        <label>HSP90-2</label>
    </interactant>
    <organismsDiffer>true</organismsDiffer>
    <experiments>2</experiments>
</comment>
<comment type="interaction">
    <interactant intactId="EBI-1778186">
        <id>Q9SUR9</id>
    </interactant>
    <interactant intactId="EBI-10689860">
        <id>A0A0H3NF38</id>
        <label>sspH2</label>
    </interactant>
    <organismsDiffer>true</organismsDiffer>
    <experiments>2</experiments>
</comment>
<comment type="alternative products">
    <event type="alternative splicing"/>
    <isoform>
        <id>Q9SUR9-1</id>
        <name>1</name>
        <sequence type="displayed"/>
    </isoform>
    <isoform>
        <id>Q9SUR9-2</id>
        <name>2</name>
        <sequence type="described" ref="VSP_040398"/>
    </isoform>
</comment>
<comment type="induction">
    <text evidence="5 6">By infection with the oomycete H.parasitica (downy mildew) and heat shock.</text>
</comment>
<comment type="similarity">
    <text evidence="9">Belongs to the SGT1 family.</text>
</comment>
<gene>
    <name type="primary">SGT1A</name>
    <name type="ordered locus">At4g23570</name>
    <name type="ORF">F9D16.40</name>
</gene>
<organism>
    <name type="scientific">Arabidopsis thaliana</name>
    <name type="common">Mouse-ear cress</name>
    <dbReference type="NCBI Taxonomy" id="3702"/>
    <lineage>
        <taxon>Eukaryota</taxon>
        <taxon>Viridiplantae</taxon>
        <taxon>Streptophyta</taxon>
        <taxon>Embryophyta</taxon>
        <taxon>Tracheophyta</taxon>
        <taxon>Spermatophyta</taxon>
        <taxon>Magnoliopsida</taxon>
        <taxon>eudicotyledons</taxon>
        <taxon>Gunneridae</taxon>
        <taxon>Pentapetalae</taxon>
        <taxon>rosids</taxon>
        <taxon>malvids</taxon>
        <taxon>Brassicales</taxon>
        <taxon>Brassicaceae</taxon>
        <taxon>Camelineae</taxon>
        <taxon>Arabidopsis</taxon>
    </lineage>
</organism>
<evidence type="ECO:0000250" key="1">
    <source>
        <dbReference type="UniProtKB" id="Q08446"/>
    </source>
</evidence>
<evidence type="ECO:0000255" key="2">
    <source>
        <dbReference type="PROSITE-ProRule" id="PRU00386"/>
    </source>
</evidence>
<evidence type="ECO:0000255" key="3">
    <source>
        <dbReference type="PROSITE-ProRule" id="PRU00547"/>
    </source>
</evidence>
<evidence type="ECO:0000269" key="4">
    <source>
    </source>
</evidence>
<evidence type="ECO:0000269" key="5">
    <source>
    </source>
</evidence>
<evidence type="ECO:0000269" key="6">
    <source>
    </source>
</evidence>
<evidence type="ECO:0000269" key="7">
    <source>
    </source>
</evidence>
<evidence type="ECO:0000269" key="8">
    <source>
    </source>
</evidence>
<evidence type="ECO:0000305" key="9"/>
<evidence type="ECO:0007829" key="10">
    <source>
        <dbReference type="PDB" id="2JKI"/>
    </source>
</evidence>
<evidence type="ECO:0007829" key="11">
    <source>
        <dbReference type="PDB" id="2XCM"/>
    </source>
</evidence>
<keyword id="KW-0002">3D-structure</keyword>
<keyword id="KW-0025">Alternative splicing</keyword>
<keyword id="KW-0391">Immunity</keyword>
<keyword id="KW-0399">Innate immunity</keyword>
<keyword id="KW-0611">Plant defense</keyword>
<keyword id="KW-1185">Reference proteome</keyword>
<keyword id="KW-0677">Repeat</keyword>
<keyword id="KW-0802">TPR repeat</keyword>
<keyword id="KW-0833">Ubl conjugation pathway</keyword>
<feature type="chain" id="PRO_0000403647" description="Protein SGT1 homolog A">
    <location>
        <begin position="1"/>
        <end position="350"/>
    </location>
</feature>
<feature type="repeat" description="TPR 1">
    <location>
        <begin position="2"/>
        <end position="35"/>
    </location>
</feature>
<feature type="repeat" description="TPR 2">
    <location>
        <begin position="37"/>
        <end position="69"/>
    </location>
</feature>
<feature type="repeat" description="TPR 3">
    <location>
        <begin position="71"/>
        <end position="103"/>
    </location>
</feature>
<feature type="domain" description="CS" evidence="3">
    <location>
        <begin position="149"/>
        <end position="238"/>
    </location>
</feature>
<feature type="domain" description="SGS" evidence="2">
    <location>
        <begin position="260"/>
        <end position="350"/>
    </location>
</feature>
<feature type="splice variant" id="VSP_040398" description="In isoform 2." evidence="9">
    <original>T</original>
    <variation>TA</variation>
    <location>
        <position position="53"/>
    </location>
</feature>
<feature type="mutagenesis site" description="Diminishes the interaction with barley HSP90." evidence="7">
    <original>Y</original>
    <variation>A</variation>
    <variation>R</variation>
    <location>
        <position position="157"/>
    </location>
</feature>
<feature type="mutagenesis site" description="Diminishes the interaction with barley HSP90." evidence="7">
    <original>F</original>
    <variation>S</variation>
    <variation>R</variation>
    <location>
        <position position="168"/>
    </location>
</feature>
<feature type="mutagenesis site" description="No effect on the interaction with barley HSP90." evidence="7">
    <original>Y</original>
    <variation>A</variation>
    <variation>R</variation>
    <location>
        <position position="199"/>
    </location>
</feature>
<feature type="mutagenesis site" description="No effect on the interaction with barley HSP90." evidence="7">
    <original>T</original>
    <variation>A</variation>
    <variation>R</variation>
    <location>
        <position position="220"/>
    </location>
</feature>
<feature type="mutagenesis site" description="Diminishes the interaction with barley HSP90." evidence="7">
    <original>K</original>
    <variation>E</variation>
    <location>
        <position position="221"/>
    </location>
</feature>
<feature type="mutagenesis site" description="Diminishes the interaction with barley HSP90." evidence="7">
    <original>E</original>
    <variation>A</variation>
    <variation>R</variation>
    <location>
        <position position="223"/>
    </location>
</feature>
<feature type="sequence conflict" description="In Ref. 1; AAL33611." evidence="9" ref="1">
    <original>C</original>
    <variation>R</variation>
    <location>
        <position position="225"/>
    </location>
</feature>
<feature type="strand" evidence="11">
    <location>
        <begin position="152"/>
        <end position="159"/>
    </location>
</feature>
<feature type="strand" evidence="11">
    <location>
        <begin position="162"/>
        <end position="168"/>
    </location>
</feature>
<feature type="helix" evidence="11">
    <location>
        <begin position="174"/>
        <end position="176"/>
    </location>
</feature>
<feature type="strand" evidence="11">
    <location>
        <begin position="177"/>
        <end position="181"/>
    </location>
</feature>
<feature type="strand" evidence="11">
    <location>
        <begin position="183"/>
        <end position="190"/>
    </location>
</feature>
<feature type="strand" evidence="10">
    <location>
        <begin position="193"/>
        <end position="195"/>
    </location>
</feature>
<feature type="strand" evidence="11">
    <location>
        <begin position="198"/>
        <end position="200"/>
    </location>
</feature>
<feature type="strand" evidence="11">
    <location>
        <begin position="203"/>
        <end position="206"/>
    </location>
</feature>
<feature type="helix" evidence="11">
    <location>
        <begin position="210"/>
        <end position="212"/>
    </location>
</feature>
<feature type="strand" evidence="11">
    <location>
        <begin position="214"/>
        <end position="217"/>
    </location>
</feature>
<feature type="strand" evidence="11">
    <location>
        <begin position="222"/>
        <end position="231"/>
    </location>
</feature>
<dbReference type="EMBL" id="AF439975">
    <property type="protein sequence ID" value="AAL33611.1"/>
    <property type="molecule type" value="mRNA"/>
</dbReference>
<dbReference type="EMBL" id="AL035394">
    <property type="protein sequence ID" value="CAA23023.1"/>
    <property type="molecule type" value="Genomic_DNA"/>
</dbReference>
<dbReference type="EMBL" id="AL161559">
    <property type="protein sequence ID" value="CAB79312.1"/>
    <property type="molecule type" value="Genomic_DNA"/>
</dbReference>
<dbReference type="EMBL" id="CP002687">
    <property type="protein sequence ID" value="AEE84776.1"/>
    <property type="molecule type" value="Genomic_DNA"/>
</dbReference>
<dbReference type="EMBL" id="CP002687">
    <property type="protein sequence ID" value="AEE84777.1"/>
    <property type="molecule type" value="Genomic_DNA"/>
</dbReference>
<dbReference type="EMBL" id="CP002687">
    <property type="protein sequence ID" value="AEE84778.1"/>
    <property type="molecule type" value="Genomic_DNA"/>
</dbReference>
<dbReference type="EMBL" id="AY063978">
    <property type="protein sequence ID" value="AAL36334.1"/>
    <property type="molecule type" value="mRNA"/>
</dbReference>
<dbReference type="EMBL" id="AY096395">
    <property type="protein sequence ID" value="AAM20035.1"/>
    <property type="molecule type" value="mRNA"/>
</dbReference>
<dbReference type="EMBL" id="AJ318020">
    <property type="protein sequence ID" value="CAC85267.1"/>
    <property type="molecule type" value="mRNA"/>
</dbReference>
<dbReference type="PIR" id="T05589">
    <property type="entry name" value="T05589"/>
</dbReference>
<dbReference type="RefSeq" id="NP_001031704.1">
    <molecule id="Q9SUR9-2"/>
    <property type="nucleotide sequence ID" value="NM_001036627.2"/>
</dbReference>
<dbReference type="RefSeq" id="NP_194088.1">
    <molecule id="Q9SUR9-1"/>
    <property type="nucleotide sequence ID" value="NM_118488.6"/>
</dbReference>
<dbReference type="RefSeq" id="NP_849429.1">
    <molecule id="Q9SUR9-1"/>
    <property type="nucleotide sequence ID" value="NM_179098.3"/>
</dbReference>
<dbReference type="PDB" id="2JKI">
    <property type="method" value="X-ray"/>
    <property type="resolution" value="3.30 A"/>
    <property type="chains" value="S/T/U=151-240"/>
</dbReference>
<dbReference type="PDB" id="2XCM">
    <property type="method" value="X-ray"/>
    <property type="resolution" value="2.20 A"/>
    <property type="chains" value="C/D=150-241"/>
</dbReference>
<dbReference type="PDBsum" id="2JKI"/>
<dbReference type="PDBsum" id="2XCM"/>
<dbReference type="SMR" id="Q9SUR9"/>
<dbReference type="BioGRID" id="13746">
    <property type="interactions" value="12"/>
</dbReference>
<dbReference type="FunCoup" id="Q9SUR9">
    <property type="interactions" value="4100"/>
</dbReference>
<dbReference type="IntAct" id="Q9SUR9">
    <property type="interactions" value="7"/>
</dbReference>
<dbReference type="MINT" id="Q9SUR9"/>
<dbReference type="STRING" id="3702.Q9SUR9"/>
<dbReference type="iPTMnet" id="Q9SUR9"/>
<dbReference type="ProteomicsDB" id="232585">
    <molecule id="Q9SUR9-1"/>
</dbReference>
<dbReference type="EnsemblPlants" id="AT4G23570.1">
    <molecule id="Q9SUR9-1"/>
    <property type="protein sequence ID" value="AT4G23570.1"/>
    <property type="gene ID" value="AT4G23570"/>
</dbReference>
<dbReference type="EnsemblPlants" id="AT4G23570.2">
    <molecule id="Q9SUR9-1"/>
    <property type="protein sequence ID" value="AT4G23570.2"/>
    <property type="gene ID" value="AT4G23570"/>
</dbReference>
<dbReference type="EnsemblPlants" id="AT4G23570.3">
    <molecule id="Q9SUR9-2"/>
    <property type="protein sequence ID" value="AT4G23570.3"/>
    <property type="gene ID" value="AT4G23570"/>
</dbReference>
<dbReference type="GeneID" id="828457"/>
<dbReference type="Gramene" id="AT4G23570.1">
    <molecule id="Q9SUR9-1"/>
    <property type="protein sequence ID" value="AT4G23570.1"/>
    <property type="gene ID" value="AT4G23570"/>
</dbReference>
<dbReference type="Gramene" id="AT4G23570.2">
    <molecule id="Q9SUR9-1"/>
    <property type="protein sequence ID" value="AT4G23570.2"/>
    <property type="gene ID" value="AT4G23570"/>
</dbReference>
<dbReference type="Gramene" id="AT4G23570.3">
    <molecule id="Q9SUR9-2"/>
    <property type="protein sequence ID" value="AT4G23570.3"/>
    <property type="gene ID" value="AT4G23570"/>
</dbReference>
<dbReference type="KEGG" id="ath:AT4G23570"/>
<dbReference type="Araport" id="AT4G23570"/>
<dbReference type="TAIR" id="AT4G23570">
    <property type="gene designation" value="SGT1A"/>
</dbReference>
<dbReference type="eggNOG" id="KOG0376">
    <property type="taxonomic scope" value="Eukaryota"/>
</dbReference>
<dbReference type="eggNOG" id="KOG1309">
    <property type="taxonomic scope" value="Eukaryota"/>
</dbReference>
<dbReference type="InParanoid" id="Q9SUR9"/>
<dbReference type="OMA" id="NPDDMEW"/>
<dbReference type="PhylomeDB" id="Q9SUR9"/>
<dbReference type="EvolutionaryTrace" id="Q9SUR9"/>
<dbReference type="PRO" id="PR:Q9SUR9"/>
<dbReference type="Proteomes" id="UP000006548">
    <property type="component" value="Chromosome 4"/>
</dbReference>
<dbReference type="ExpressionAtlas" id="Q9SUR9">
    <property type="expression patterns" value="baseline and differential"/>
</dbReference>
<dbReference type="GO" id="GO:0005829">
    <property type="term" value="C:cytosol"/>
    <property type="evidence" value="ECO:0007005"/>
    <property type="project" value="TAIR"/>
</dbReference>
<dbReference type="GO" id="GO:0005634">
    <property type="term" value="C:nucleus"/>
    <property type="evidence" value="ECO:0007005"/>
    <property type="project" value="TAIR"/>
</dbReference>
<dbReference type="GO" id="GO:0019005">
    <property type="term" value="C:SCF ubiquitin ligase complex"/>
    <property type="evidence" value="ECO:0000250"/>
    <property type="project" value="TAIR"/>
</dbReference>
<dbReference type="GO" id="GO:0051087">
    <property type="term" value="F:protein-folding chaperone binding"/>
    <property type="evidence" value="ECO:0007669"/>
    <property type="project" value="InterPro"/>
</dbReference>
<dbReference type="GO" id="GO:0071365">
    <property type="term" value="P:cellular response to auxin stimulus"/>
    <property type="evidence" value="ECO:0000315"/>
    <property type="project" value="UniProtKB"/>
</dbReference>
<dbReference type="GO" id="GO:0071456">
    <property type="term" value="P:cellular response to hypoxia"/>
    <property type="evidence" value="ECO:0007007"/>
    <property type="project" value="TAIR"/>
</dbReference>
<dbReference type="GO" id="GO:0006952">
    <property type="term" value="P:defense response"/>
    <property type="evidence" value="ECO:0000315"/>
    <property type="project" value="TAIR"/>
</dbReference>
<dbReference type="GO" id="GO:0009793">
    <property type="term" value="P:embryo development ending in seed dormancy"/>
    <property type="evidence" value="ECO:0000316"/>
    <property type="project" value="TAIR"/>
</dbReference>
<dbReference type="GO" id="GO:0045087">
    <property type="term" value="P:innate immune response"/>
    <property type="evidence" value="ECO:0007669"/>
    <property type="project" value="UniProtKB-KW"/>
</dbReference>
<dbReference type="GO" id="GO:1900150">
    <property type="term" value="P:regulation of defense response to fungus"/>
    <property type="evidence" value="ECO:0000315"/>
    <property type="project" value="UniProtKB"/>
</dbReference>
<dbReference type="GO" id="GO:0006511">
    <property type="term" value="P:ubiquitin-dependent protein catabolic process"/>
    <property type="evidence" value="ECO:0000250"/>
    <property type="project" value="TAIR"/>
</dbReference>
<dbReference type="CDD" id="cd06466">
    <property type="entry name" value="p23_CS_SGT1_like"/>
    <property type="match status" value="1"/>
</dbReference>
<dbReference type="FunFam" id="1.25.40.10:FF:000778">
    <property type="entry name" value="Protein SGT1 homolog"/>
    <property type="match status" value="1"/>
</dbReference>
<dbReference type="FunFam" id="2.60.40.790:FF:000034">
    <property type="entry name" value="Protein SGT1 homolog A"/>
    <property type="match status" value="1"/>
</dbReference>
<dbReference type="Gene3D" id="2.60.40.790">
    <property type="match status" value="1"/>
</dbReference>
<dbReference type="Gene3D" id="1.25.40.10">
    <property type="entry name" value="Tetratricopeptide repeat domain"/>
    <property type="match status" value="1"/>
</dbReference>
<dbReference type="InterPro" id="IPR007052">
    <property type="entry name" value="CS_dom"/>
</dbReference>
<dbReference type="InterPro" id="IPR008978">
    <property type="entry name" value="HSP20-like_chaperone"/>
</dbReference>
<dbReference type="InterPro" id="IPR007699">
    <property type="entry name" value="SGS_dom"/>
</dbReference>
<dbReference type="InterPro" id="IPR044563">
    <property type="entry name" value="Sgt1-like"/>
</dbReference>
<dbReference type="InterPro" id="IPR011990">
    <property type="entry name" value="TPR-like_helical_dom_sf"/>
</dbReference>
<dbReference type="InterPro" id="IPR019734">
    <property type="entry name" value="TPR_rpt"/>
</dbReference>
<dbReference type="PANTHER" id="PTHR45862">
    <property type="entry name" value="PROTEIN SGT1 HOMOLOG"/>
    <property type="match status" value="1"/>
</dbReference>
<dbReference type="Pfam" id="PF04969">
    <property type="entry name" value="CS"/>
    <property type="match status" value="1"/>
</dbReference>
<dbReference type="Pfam" id="PF05002">
    <property type="entry name" value="SGS"/>
    <property type="match status" value="1"/>
</dbReference>
<dbReference type="Pfam" id="PF13181">
    <property type="entry name" value="TPR_8"/>
    <property type="match status" value="2"/>
</dbReference>
<dbReference type="SMART" id="SM00028">
    <property type="entry name" value="TPR"/>
    <property type="match status" value="3"/>
</dbReference>
<dbReference type="SUPFAM" id="SSF49764">
    <property type="entry name" value="HSP20-like chaperones"/>
    <property type="match status" value="1"/>
</dbReference>
<dbReference type="SUPFAM" id="SSF48452">
    <property type="entry name" value="TPR-like"/>
    <property type="match status" value="1"/>
</dbReference>
<dbReference type="PROSITE" id="PS51203">
    <property type="entry name" value="CS"/>
    <property type="match status" value="1"/>
</dbReference>
<dbReference type="PROSITE" id="PS51048">
    <property type="entry name" value="SGS"/>
    <property type="match status" value="1"/>
</dbReference>
<dbReference type="PROSITE" id="PS50005">
    <property type="entry name" value="TPR"/>
    <property type="match status" value="3"/>
</dbReference>
<dbReference type="PROSITE" id="PS50293">
    <property type="entry name" value="TPR_REGION"/>
    <property type="match status" value="1"/>
</dbReference>
<protein>
    <recommendedName>
        <fullName evidence="1">Protein SGT1 homolog A</fullName>
        <shortName>AtSGT1a</shortName>
    </recommendedName>
    <alternativeName>
        <fullName evidence="1">Suppressor of G2 allele of SKP1 homolog A</fullName>
    </alternativeName>
</protein>